<protein>
    <recommendedName>
        <fullName>Actobindin</fullName>
    </recommendedName>
</protein>
<sequence length="88" mass="9554">MNPELQSAIGQGAALKHAETVDKSAPQIENVTVKKVDRSSFLEEVAKPHELKHAETVDKSGPAIPEDVHVKKVDRGAFLSEIEKAAKQ</sequence>
<reference key="1">
    <citation type="journal article" date="1990" name="J. Biol. Chem.">
        <title>The covalent structure of Acanthamoeba actobindin.</title>
        <authorList>
            <person name="Vandekerckhove J."/>
            <person name="van Damme J."/>
            <person name="Vancompernolle K."/>
            <person name="Bubb M.R."/>
            <person name="Lambooy P.K."/>
            <person name="Korn E.D."/>
        </authorList>
    </citation>
    <scope>PROTEIN SEQUENCE</scope>
    <scope>ACETYLATION AT MET-1</scope>
    <scope>METHYLATION AT LYS-35 AND LYS-72</scope>
</reference>
<organism>
    <name type="scientific">Acanthamoeba castellanii</name>
    <name type="common">Amoeba</name>
    <dbReference type="NCBI Taxonomy" id="5755"/>
    <lineage>
        <taxon>Eukaryota</taxon>
        <taxon>Amoebozoa</taxon>
        <taxon>Discosea</taxon>
        <taxon>Longamoebia</taxon>
        <taxon>Centramoebida</taxon>
        <taxon>Acanthamoebidae</taxon>
        <taxon>Acanthamoeba</taxon>
    </lineage>
</organism>
<dbReference type="PIR" id="A36614">
    <property type="entry name" value="A36614"/>
</dbReference>
<dbReference type="ELM" id="P18281"/>
<dbReference type="iPTMnet" id="P18281"/>
<dbReference type="VEuPathDB" id="AmoebaDB:ACA1_256510"/>
<dbReference type="OMA" id="VAKPHEL"/>
<dbReference type="GO" id="GO:0003785">
    <property type="term" value="F:actin monomer binding"/>
    <property type="evidence" value="ECO:0000314"/>
    <property type="project" value="UniProtKB"/>
</dbReference>
<dbReference type="CDD" id="cd22063">
    <property type="entry name" value="WH2_Actobindin"/>
    <property type="match status" value="1"/>
</dbReference>
<dbReference type="InterPro" id="IPR016365">
    <property type="entry name" value="Actobindin"/>
</dbReference>
<dbReference type="InterPro" id="IPR003124">
    <property type="entry name" value="WH2_dom"/>
</dbReference>
<dbReference type="Pfam" id="PF02205">
    <property type="entry name" value="WH2"/>
    <property type="match status" value="1"/>
</dbReference>
<dbReference type="PIRSF" id="PIRSF002724">
    <property type="entry name" value="Actobindin"/>
    <property type="match status" value="1"/>
</dbReference>
<proteinExistence type="evidence at protein level"/>
<comment type="function">
    <text>Is able to bind two actin monomers at high concentrations of G-actin.</text>
</comment>
<comment type="subunit">
    <text>Monomer.</text>
</comment>
<keyword id="KW-0007">Acetylation</keyword>
<keyword id="KW-0009">Actin-binding</keyword>
<keyword id="KW-0903">Direct protein sequencing</keyword>
<keyword id="KW-0488">Methylation</keyword>
<feature type="chain" id="PRO_0000064444" description="Actobindin">
    <location>
        <begin position="1"/>
        <end position="88"/>
    </location>
</feature>
<feature type="domain" description="WH2">
    <location>
        <begin position="37"/>
        <end position="54"/>
    </location>
</feature>
<feature type="region of interest" description="Disordered" evidence="1">
    <location>
        <begin position="1"/>
        <end position="22"/>
    </location>
</feature>
<feature type="modified residue" description="N-acetylmethionine" evidence="2">
    <location>
        <position position="1"/>
    </location>
</feature>
<feature type="modified residue" description="N6,N6,N6-trimethyllysine" evidence="2">
    <location>
        <position position="35"/>
    </location>
</feature>
<feature type="modified residue" description="N6,N6,N6-trimethyllysine" evidence="2">
    <location>
        <position position="72"/>
    </location>
</feature>
<accession>P18281</accession>
<name>ACTO_ACACA</name>
<evidence type="ECO:0000256" key="1">
    <source>
        <dbReference type="SAM" id="MobiDB-lite"/>
    </source>
</evidence>
<evidence type="ECO:0000269" key="2">
    <source>
    </source>
</evidence>